<proteinExistence type="evidence at transcript level"/>
<reference key="1">
    <citation type="submission" date="2004-10" db="EMBL/GenBank/DDBJ databases">
        <authorList>
            <consortium name="NIH - Xenopus Gene Collection (XGC) project"/>
        </authorList>
    </citation>
    <scope>NUCLEOTIDE SEQUENCE [LARGE SCALE MRNA]</scope>
    <source>
        <tissue>Brain</tissue>
    </source>
</reference>
<gene>
    <name type="primary">gpx8-b</name>
</gene>
<organism>
    <name type="scientific">Xenopus laevis</name>
    <name type="common">African clawed frog</name>
    <dbReference type="NCBI Taxonomy" id="8355"/>
    <lineage>
        <taxon>Eukaryota</taxon>
        <taxon>Metazoa</taxon>
        <taxon>Chordata</taxon>
        <taxon>Craniata</taxon>
        <taxon>Vertebrata</taxon>
        <taxon>Euteleostomi</taxon>
        <taxon>Amphibia</taxon>
        <taxon>Batrachia</taxon>
        <taxon>Anura</taxon>
        <taxon>Pipoidea</taxon>
        <taxon>Pipidae</taxon>
        <taxon>Xenopodinae</taxon>
        <taxon>Xenopus</taxon>
        <taxon>Xenopus</taxon>
    </lineage>
</organism>
<accession>Q5U583</accession>
<comment type="catalytic activity">
    <reaction>
        <text>2 glutathione + H2O2 = glutathione disulfide + 2 H2O</text>
        <dbReference type="Rhea" id="RHEA:16833"/>
        <dbReference type="ChEBI" id="CHEBI:15377"/>
        <dbReference type="ChEBI" id="CHEBI:16240"/>
        <dbReference type="ChEBI" id="CHEBI:57925"/>
        <dbReference type="ChEBI" id="CHEBI:58297"/>
        <dbReference type="EC" id="1.11.1.9"/>
    </reaction>
</comment>
<comment type="subcellular location">
    <subcellularLocation>
        <location evidence="3">Membrane</location>
        <topology evidence="3">Single-pass membrane protein</topology>
    </subcellularLocation>
</comment>
<comment type="similarity">
    <text evidence="3">Belongs to the glutathione peroxidase family.</text>
</comment>
<protein>
    <recommendedName>
        <fullName>Probable glutathione peroxidase 8-B</fullName>
        <shortName>GPx-8-B</shortName>
        <shortName>GSHPx-8-B</shortName>
        <ecNumber>1.11.1.9</ecNumber>
    </recommendedName>
</protein>
<keyword id="KW-0472">Membrane</keyword>
<keyword id="KW-0560">Oxidoreductase</keyword>
<keyword id="KW-0575">Peroxidase</keyword>
<keyword id="KW-1185">Reference proteome</keyword>
<keyword id="KW-0812">Transmembrane</keyword>
<keyword id="KW-1133">Transmembrane helix</keyword>
<evidence type="ECO:0000250" key="1"/>
<evidence type="ECO:0000255" key="2"/>
<evidence type="ECO:0000305" key="3"/>
<name>GPX8B_XENLA</name>
<dbReference type="EC" id="1.11.1.9"/>
<dbReference type="EMBL" id="BC084801">
    <property type="protein sequence ID" value="AAH84801.1"/>
    <property type="molecule type" value="mRNA"/>
</dbReference>
<dbReference type="RefSeq" id="NP_001088474.1">
    <property type="nucleotide sequence ID" value="NM_001095005.1"/>
</dbReference>
<dbReference type="SMR" id="Q5U583"/>
<dbReference type="DNASU" id="495339"/>
<dbReference type="GeneID" id="495339"/>
<dbReference type="KEGG" id="xla:495339"/>
<dbReference type="AGR" id="Xenbase:XB-GENE-6253966"/>
<dbReference type="CTD" id="495339"/>
<dbReference type="Xenbase" id="XB-GENE-6253966">
    <property type="gene designation" value="gpx8.L"/>
</dbReference>
<dbReference type="OMA" id="PTWNFCK"/>
<dbReference type="OrthoDB" id="446890at2759"/>
<dbReference type="Proteomes" id="UP000186698">
    <property type="component" value="Chromosome 1L"/>
</dbReference>
<dbReference type="Bgee" id="495339">
    <property type="expression patterns" value="Expressed in internal ear and 20 other cell types or tissues"/>
</dbReference>
<dbReference type="GO" id="GO:0016020">
    <property type="term" value="C:membrane"/>
    <property type="evidence" value="ECO:0007669"/>
    <property type="project" value="UniProtKB-SubCell"/>
</dbReference>
<dbReference type="GO" id="GO:0004602">
    <property type="term" value="F:glutathione peroxidase activity"/>
    <property type="evidence" value="ECO:0007669"/>
    <property type="project" value="UniProtKB-EC"/>
</dbReference>
<dbReference type="GO" id="GO:0004601">
    <property type="term" value="F:peroxidase activity"/>
    <property type="evidence" value="ECO:0000318"/>
    <property type="project" value="GO_Central"/>
</dbReference>
<dbReference type="GO" id="GO:0006979">
    <property type="term" value="P:response to oxidative stress"/>
    <property type="evidence" value="ECO:0007669"/>
    <property type="project" value="InterPro"/>
</dbReference>
<dbReference type="CDD" id="cd00340">
    <property type="entry name" value="GSH_Peroxidase"/>
    <property type="match status" value="1"/>
</dbReference>
<dbReference type="FunFam" id="3.40.30.10:FF:000049">
    <property type="entry name" value="Glutathione peroxidase"/>
    <property type="match status" value="1"/>
</dbReference>
<dbReference type="Gene3D" id="3.40.30.10">
    <property type="entry name" value="Glutaredoxin"/>
    <property type="match status" value="1"/>
</dbReference>
<dbReference type="InterPro" id="IPR013376">
    <property type="entry name" value="Glut_perox_Gpx7"/>
</dbReference>
<dbReference type="InterPro" id="IPR000889">
    <property type="entry name" value="Glutathione_peroxidase"/>
</dbReference>
<dbReference type="InterPro" id="IPR029760">
    <property type="entry name" value="GPX_CS"/>
</dbReference>
<dbReference type="InterPro" id="IPR036249">
    <property type="entry name" value="Thioredoxin-like_sf"/>
</dbReference>
<dbReference type="InterPro" id="IPR013766">
    <property type="entry name" value="Thioredoxin_domain"/>
</dbReference>
<dbReference type="NCBIfam" id="TIGR02540">
    <property type="entry name" value="gpx7"/>
    <property type="match status" value="1"/>
</dbReference>
<dbReference type="PANTHER" id="PTHR11592">
    <property type="entry name" value="GLUTATHIONE PEROXIDASE"/>
    <property type="match status" value="1"/>
</dbReference>
<dbReference type="PANTHER" id="PTHR11592:SF7">
    <property type="entry name" value="GLUTATHIONE PEROXIDASE 8-RELATED"/>
    <property type="match status" value="1"/>
</dbReference>
<dbReference type="Pfam" id="PF00255">
    <property type="entry name" value="GSHPx"/>
    <property type="match status" value="1"/>
</dbReference>
<dbReference type="PIRSF" id="PIRSF000303">
    <property type="entry name" value="Glutathion_perox"/>
    <property type="match status" value="1"/>
</dbReference>
<dbReference type="PRINTS" id="PR01011">
    <property type="entry name" value="GLUTPROXDASE"/>
</dbReference>
<dbReference type="SUPFAM" id="SSF52833">
    <property type="entry name" value="Thioredoxin-like"/>
    <property type="match status" value="1"/>
</dbReference>
<dbReference type="PROSITE" id="PS00763">
    <property type="entry name" value="GLUTATHIONE_PEROXID_2"/>
    <property type="match status" value="1"/>
</dbReference>
<dbReference type="PROSITE" id="PS51355">
    <property type="entry name" value="GLUTATHIONE_PEROXID_3"/>
    <property type="match status" value="1"/>
</dbReference>
<sequence>MEPLSPYPLKCSSPKAKVFLVFFSMVLCTGILCVLQLKFLRAKGGDFYSYEVTDAKGRTVALSKYRGKASLVVNVASGCPHTEANYRSLQELHREFGPSHFTVLAFPCNQFGESEPGTNKEIEAMAKRNYGVTFPVFSKIKILGSEAEPAYRFLVDSTKKEPRWNFWKYLVDPQGQVVKYWRPDETAESIRPEVASLVRQIIMKKKEDL</sequence>
<feature type="chain" id="PRO_0000317760" description="Probable glutathione peroxidase 8-B">
    <location>
        <begin position="1"/>
        <end position="209"/>
    </location>
</feature>
<feature type="transmembrane region" description="Helical" evidence="2">
    <location>
        <begin position="18"/>
        <end position="40"/>
    </location>
</feature>
<feature type="active site" evidence="1">
    <location>
        <position position="79"/>
    </location>
</feature>